<name>ATPD_RICTY</name>
<dbReference type="EMBL" id="AE017197">
    <property type="protein sequence ID" value="AAU04247.1"/>
    <property type="molecule type" value="Genomic_DNA"/>
</dbReference>
<dbReference type="RefSeq" id="WP_011191222.1">
    <property type="nucleotide sequence ID" value="NC_006142.1"/>
</dbReference>
<dbReference type="SMR" id="Q68VU5"/>
<dbReference type="KEGG" id="rty:RT0791"/>
<dbReference type="eggNOG" id="COG0712">
    <property type="taxonomic scope" value="Bacteria"/>
</dbReference>
<dbReference type="HOGENOM" id="CLU_085114_1_1_5"/>
<dbReference type="OrthoDB" id="7160553at2"/>
<dbReference type="Proteomes" id="UP000000604">
    <property type="component" value="Chromosome"/>
</dbReference>
<dbReference type="GO" id="GO:0005886">
    <property type="term" value="C:plasma membrane"/>
    <property type="evidence" value="ECO:0007669"/>
    <property type="project" value="UniProtKB-SubCell"/>
</dbReference>
<dbReference type="GO" id="GO:0045259">
    <property type="term" value="C:proton-transporting ATP synthase complex"/>
    <property type="evidence" value="ECO:0007669"/>
    <property type="project" value="UniProtKB-KW"/>
</dbReference>
<dbReference type="GO" id="GO:0046933">
    <property type="term" value="F:proton-transporting ATP synthase activity, rotational mechanism"/>
    <property type="evidence" value="ECO:0007669"/>
    <property type="project" value="UniProtKB-UniRule"/>
</dbReference>
<dbReference type="Gene3D" id="1.10.520.20">
    <property type="entry name" value="N-terminal domain of the delta subunit of the F1F0-ATP synthase"/>
    <property type="match status" value="1"/>
</dbReference>
<dbReference type="HAMAP" id="MF_01416">
    <property type="entry name" value="ATP_synth_delta_bact"/>
    <property type="match status" value="1"/>
</dbReference>
<dbReference type="InterPro" id="IPR026015">
    <property type="entry name" value="ATP_synth_OSCP/delta_N_sf"/>
</dbReference>
<dbReference type="InterPro" id="IPR000711">
    <property type="entry name" value="ATPase_OSCP/dsu"/>
</dbReference>
<dbReference type="NCBIfam" id="TIGR01145">
    <property type="entry name" value="ATP_synt_delta"/>
    <property type="match status" value="1"/>
</dbReference>
<dbReference type="PANTHER" id="PTHR11910">
    <property type="entry name" value="ATP SYNTHASE DELTA CHAIN"/>
    <property type="match status" value="1"/>
</dbReference>
<dbReference type="Pfam" id="PF00213">
    <property type="entry name" value="OSCP"/>
    <property type="match status" value="1"/>
</dbReference>
<dbReference type="PRINTS" id="PR00125">
    <property type="entry name" value="ATPASEDELTA"/>
</dbReference>
<dbReference type="SUPFAM" id="SSF47928">
    <property type="entry name" value="N-terminal domain of the delta subunit of the F1F0-ATP synthase"/>
    <property type="match status" value="1"/>
</dbReference>
<accession>Q68VU5</accession>
<proteinExistence type="inferred from homology"/>
<gene>
    <name evidence="1" type="primary">atpH</name>
    <name type="ordered locus">RT0791</name>
</gene>
<organism>
    <name type="scientific">Rickettsia typhi (strain ATCC VR-144 / Wilmington)</name>
    <dbReference type="NCBI Taxonomy" id="257363"/>
    <lineage>
        <taxon>Bacteria</taxon>
        <taxon>Pseudomonadati</taxon>
        <taxon>Pseudomonadota</taxon>
        <taxon>Alphaproteobacteria</taxon>
        <taxon>Rickettsiales</taxon>
        <taxon>Rickettsiaceae</taxon>
        <taxon>Rickettsieae</taxon>
        <taxon>Rickettsia</taxon>
        <taxon>typhus group</taxon>
    </lineage>
</organism>
<evidence type="ECO:0000255" key="1">
    <source>
        <dbReference type="HAMAP-Rule" id="MF_01416"/>
    </source>
</evidence>
<feature type="chain" id="PRO_0000288727" description="ATP synthase subunit delta">
    <location>
        <begin position="1"/>
        <end position="183"/>
    </location>
</feature>
<protein>
    <recommendedName>
        <fullName evidence="1">ATP synthase subunit delta</fullName>
    </recommendedName>
    <alternativeName>
        <fullName evidence="1">ATP synthase F(1) sector subunit delta</fullName>
    </alternativeName>
    <alternativeName>
        <fullName evidence="1">F-type ATPase subunit delta</fullName>
        <shortName evidence="1">F-ATPase subunit delta</shortName>
    </alternativeName>
</protein>
<comment type="function">
    <text evidence="1">F(1)F(0) ATP synthase produces ATP from ADP in the presence of a proton or sodium gradient. F-type ATPases consist of two structural domains, F(1) containing the extramembraneous catalytic core and F(0) containing the membrane proton channel, linked together by a central stalk and a peripheral stalk. During catalysis, ATP synthesis in the catalytic domain of F(1) is coupled via a rotary mechanism of the central stalk subunits to proton translocation.</text>
</comment>
<comment type="function">
    <text evidence="1">This protein is part of the stalk that links CF(0) to CF(1). It either transmits conformational changes from CF(0) to CF(1) or is implicated in proton conduction.</text>
</comment>
<comment type="subunit">
    <text evidence="1">F-type ATPases have 2 components, F(1) - the catalytic core - and F(0) - the membrane proton channel. F(1) has five subunits: alpha(3), beta(3), gamma(1), delta(1), epsilon(1). F(0) has three main subunits: a(1), b(2) and c(10-14). The alpha and beta chains form an alternating ring which encloses part of the gamma chain. F(1) is attached to F(0) by a central stalk formed by the gamma and epsilon chains, while a peripheral stalk is formed by the delta and b chains.</text>
</comment>
<comment type="subcellular location">
    <subcellularLocation>
        <location evidence="1">Cell inner membrane</location>
        <topology evidence="1">Peripheral membrane protein</topology>
    </subcellularLocation>
</comment>
<comment type="similarity">
    <text evidence="1">Belongs to the ATPase delta chain family.</text>
</comment>
<reference key="1">
    <citation type="journal article" date="2004" name="J. Bacteriol.">
        <title>Complete genome sequence of Rickettsia typhi and comparison with sequences of other Rickettsiae.</title>
        <authorList>
            <person name="McLeod M.P."/>
            <person name="Qin X."/>
            <person name="Karpathy S.E."/>
            <person name="Gioia J."/>
            <person name="Highlander S.K."/>
            <person name="Fox G.E."/>
            <person name="McNeill T.Z."/>
            <person name="Jiang H."/>
            <person name="Muzny D."/>
            <person name="Jacob L.S."/>
            <person name="Hawes A.C."/>
            <person name="Sodergren E."/>
            <person name="Gill R."/>
            <person name="Hume J."/>
            <person name="Morgan M."/>
            <person name="Fan G."/>
            <person name="Amin A.G."/>
            <person name="Gibbs R.A."/>
            <person name="Hong C."/>
            <person name="Yu X.-J."/>
            <person name="Walker D.H."/>
            <person name="Weinstock G.M."/>
        </authorList>
    </citation>
    <scope>NUCLEOTIDE SEQUENCE [LARGE SCALE GENOMIC DNA]</scope>
    <source>
        <strain>ATCC VR-144 / Wilmington</strain>
    </source>
</reference>
<keyword id="KW-0066">ATP synthesis</keyword>
<keyword id="KW-0997">Cell inner membrane</keyword>
<keyword id="KW-1003">Cell membrane</keyword>
<keyword id="KW-0139">CF(1)</keyword>
<keyword id="KW-0375">Hydrogen ion transport</keyword>
<keyword id="KW-0406">Ion transport</keyword>
<keyword id="KW-0472">Membrane</keyword>
<keyword id="KW-0813">Transport</keyword>
<sequence length="183" mass="21282">MNKDNLIQNYAVALFNNALLDNIQVTIFEEITLLNRIIEDSFDIKEFLISPIVNKIDKINVINSLIKNTKLNKIVNNFLLLLIKNSRTHILSNIVEAYNKLLYESRNIKIVQVISSNQLQPREQEWIQYRIEKELQQKTALFFDIDNTIIGGIVIKYDNVLRDYSIKGSLEKIAKCLKNVKVC</sequence>